<accession>Q3J8S3</accession>
<comment type="function">
    <text evidence="1">One of the primary rRNA binding proteins, it binds specifically to the 5'-end of 16S ribosomal RNA.</text>
</comment>
<comment type="subunit">
    <text evidence="1">Part of the 30S ribosomal subunit.</text>
</comment>
<comment type="similarity">
    <text evidence="1">Belongs to the universal ribosomal protein uS17 family.</text>
</comment>
<dbReference type="EMBL" id="CP000127">
    <property type="protein sequence ID" value="ABA58773.1"/>
    <property type="molecule type" value="Genomic_DNA"/>
</dbReference>
<dbReference type="RefSeq" id="WP_011330922.1">
    <property type="nucleotide sequence ID" value="NC_007484.1"/>
</dbReference>
<dbReference type="SMR" id="Q3J8S3"/>
<dbReference type="FunCoup" id="Q3J8S3">
    <property type="interactions" value="437"/>
</dbReference>
<dbReference type="STRING" id="323261.Noc_2315"/>
<dbReference type="KEGG" id="noc:Noc_2315"/>
<dbReference type="eggNOG" id="COG0186">
    <property type="taxonomic scope" value="Bacteria"/>
</dbReference>
<dbReference type="HOGENOM" id="CLU_073626_1_1_6"/>
<dbReference type="InParanoid" id="Q3J8S3"/>
<dbReference type="Proteomes" id="UP000006838">
    <property type="component" value="Chromosome"/>
</dbReference>
<dbReference type="GO" id="GO:0022627">
    <property type="term" value="C:cytosolic small ribosomal subunit"/>
    <property type="evidence" value="ECO:0007669"/>
    <property type="project" value="TreeGrafter"/>
</dbReference>
<dbReference type="GO" id="GO:0019843">
    <property type="term" value="F:rRNA binding"/>
    <property type="evidence" value="ECO:0007669"/>
    <property type="project" value="UniProtKB-UniRule"/>
</dbReference>
<dbReference type="GO" id="GO:0003735">
    <property type="term" value="F:structural constituent of ribosome"/>
    <property type="evidence" value="ECO:0007669"/>
    <property type="project" value="InterPro"/>
</dbReference>
<dbReference type="GO" id="GO:0006412">
    <property type="term" value="P:translation"/>
    <property type="evidence" value="ECO:0007669"/>
    <property type="project" value="UniProtKB-UniRule"/>
</dbReference>
<dbReference type="CDD" id="cd00364">
    <property type="entry name" value="Ribosomal_uS17"/>
    <property type="match status" value="1"/>
</dbReference>
<dbReference type="Gene3D" id="2.40.50.140">
    <property type="entry name" value="Nucleic acid-binding proteins"/>
    <property type="match status" value="1"/>
</dbReference>
<dbReference type="HAMAP" id="MF_01345_B">
    <property type="entry name" value="Ribosomal_uS17_B"/>
    <property type="match status" value="1"/>
</dbReference>
<dbReference type="InterPro" id="IPR012340">
    <property type="entry name" value="NA-bd_OB-fold"/>
</dbReference>
<dbReference type="InterPro" id="IPR000266">
    <property type="entry name" value="Ribosomal_uS17"/>
</dbReference>
<dbReference type="InterPro" id="IPR019984">
    <property type="entry name" value="Ribosomal_uS17_bact/chlr"/>
</dbReference>
<dbReference type="NCBIfam" id="NF004123">
    <property type="entry name" value="PRK05610.1"/>
    <property type="match status" value="1"/>
</dbReference>
<dbReference type="NCBIfam" id="TIGR03635">
    <property type="entry name" value="uS17_bact"/>
    <property type="match status" value="1"/>
</dbReference>
<dbReference type="PANTHER" id="PTHR10744">
    <property type="entry name" value="40S RIBOSOMAL PROTEIN S11 FAMILY MEMBER"/>
    <property type="match status" value="1"/>
</dbReference>
<dbReference type="PANTHER" id="PTHR10744:SF1">
    <property type="entry name" value="SMALL RIBOSOMAL SUBUNIT PROTEIN US17M"/>
    <property type="match status" value="1"/>
</dbReference>
<dbReference type="Pfam" id="PF00366">
    <property type="entry name" value="Ribosomal_S17"/>
    <property type="match status" value="1"/>
</dbReference>
<dbReference type="PRINTS" id="PR00973">
    <property type="entry name" value="RIBOSOMALS17"/>
</dbReference>
<dbReference type="SUPFAM" id="SSF50249">
    <property type="entry name" value="Nucleic acid-binding proteins"/>
    <property type="match status" value="1"/>
</dbReference>
<name>RS17_NITOC</name>
<feature type="chain" id="PRO_0000233520" description="Small ribosomal subunit protein uS17">
    <location>
        <begin position="1"/>
        <end position="86"/>
    </location>
</feature>
<gene>
    <name evidence="1" type="primary">rpsQ</name>
    <name type="ordered locus">Noc_2315</name>
</gene>
<protein>
    <recommendedName>
        <fullName evidence="1">Small ribosomal subunit protein uS17</fullName>
    </recommendedName>
    <alternativeName>
        <fullName evidence="2">30S ribosomal protein S17</fullName>
    </alternativeName>
</protein>
<organism>
    <name type="scientific">Nitrosococcus oceani (strain ATCC 19707 / BCRC 17464 / JCM 30415 / NCIMB 11848 / C-107)</name>
    <dbReference type="NCBI Taxonomy" id="323261"/>
    <lineage>
        <taxon>Bacteria</taxon>
        <taxon>Pseudomonadati</taxon>
        <taxon>Pseudomonadota</taxon>
        <taxon>Gammaproteobacteria</taxon>
        <taxon>Chromatiales</taxon>
        <taxon>Chromatiaceae</taxon>
        <taxon>Nitrosococcus</taxon>
    </lineage>
</organism>
<evidence type="ECO:0000255" key="1">
    <source>
        <dbReference type="HAMAP-Rule" id="MF_01345"/>
    </source>
</evidence>
<evidence type="ECO:0000305" key="2"/>
<proteinExistence type="inferred from homology"/>
<sequence length="86" mass="9948">MSDQEKISHTVIGRVVSDKMDKTITVLIERKVAHSLYKKYVRRFTKLHAHDENNECRMGDIVAIAGTRPLSKTKAWKLVDILERAR</sequence>
<reference key="1">
    <citation type="journal article" date="2006" name="Appl. Environ. Microbiol.">
        <title>Complete genome sequence of the marine, chemolithoautotrophic, ammonia-oxidizing bacterium Nitrosococcus oceani ATCC 19707.</title>
        <authorList>
            <person name="Klotz M.G."/>
            <person name="Arp D.J."/>
            <person name="Chain P.S.G."/>
            <person name="El-Sheikh A.F."/>
            <person name="Hauser L.J."/>
            <person name="Hommes N.G."/>
            <person name="Larimer F.W."/>
            <person name="Malfatti S.A."/>
            <person name="Norton J.M."/>
            <person name="Poret-Peterson A.T."/>
            <person name="Vergez L.M."/>
            <person name="Ward B.B."/>
        </authorList>
    </citation>
    <scope>NUCLEOTIDE SEQUENCE [LARGE SCALE GENOMIC DNA]</scope>
    <source>
        <strain>ATCC 19707 / BCRC 17464 / JCM 30415 / NCIMB 11848 / C-107</strain>
    </source>
</reference>
<keyword id="KW-1185">Reference proteome</keyword>
<keyword id="KW-0687">Ribonucleoprotein</keyword>
<keyword id="KW-0689">Ribosomal protein</keyword>
<keyword id="KW-0694">RNA-binding</keyword>
<keyword id="KW-0699">rRNA-binding</keyword>